<accession>B8EJU1</accession>
<feature type="chain" id="PRO_1000124640" description="Lipoyl synthase">
    <location>
        <begin position="1"/>
        <end position="325"/>
    </location>
</feature>
<feature type="domain" description="Radical SAM core" evidence="2">
    <location>
        <begin position="73"/>
        <end position="289"/>
    </location>
</feature>
<feature type="region of interest" description="Disordered" evidence="3">
    <location>
        <begin position="1"/>
        <end position="31"/>
    </location>
</feature>
<feature type="compositionally biased region" description="Basic and acidic residues" evidence="3">
    <location>
        <begin position="8"/>
        <end position="31"/>
    </location>
</feature>
<feature type="binding site" evidence="1">
    <location>
        <position position="61"/>
    </location>
    <ligand>
        <name>[4Fe-4S] cluster</name>
        <dbReference type="ChEBI" id="CHEBI:49883"/>
        <label>1</label>
    </ligand>
</feature>
<feature type="binding site" evidence="1">
    <location>
        <position position="66"/>
    </location>
    <ligand>
        <name>[4Fe-4S] cluster</name>
        <dbReference type="ChEBI" id="CHEBI:49883"/>
        <label>1</label>
    </ligand>
</feature>
<feature type="binding site" evidence="1">
    <location>
        <position position="72"/>
    </location>
    <ligand>
        <name>[4Fe-4S] cluster</name>
        <dbReference type="ChEBI" id="CHEBI:49883"/>
        <label>1</label>
    </ligand>
</feature>
<feature type="binding site" evidence="1">
    <location>
        <position position="87"/>
    </location>
    <ligand>
        <name>[4Fe-4S] cluster</name>
        <dbReference type="ChEBI" id="CHEBI:49883"/>
        <label>2</label>
        <note>4Fe-4S-S-AdoMet</note>
    </ligand>
</feature>
<feature type="binding site" evidence="1">
    <location>
        <position position="91"/>
    </location>
    <ligand>
        <name>[4Fe-4S] cluster</name>
        <dbReference type="ChEBI" id="CHEBI:49883"/>
        <label>2</label>
        <note>4Fe-4S-S-AdoMet</note>
    </ligand>
</feature>
<feature type="binding site" evidence="1">
    <location>
        <position position="94"/>
    </location>
    <ligand>
        <name>[4Fe-4S] cluster</name>
        <dbReference type="ChEBI" id="CHEBI:49883"/>
        <label>2</label>
        <note>4Fe-4S-S-AdoMet</note>
    </ligand>
</feature>
<feature type="binding site" evidence="1">
    <location>
        <position position="300"/>
    </location>
    <ligand>
        <name>[4Fe-4S] cluster</name>
        <dbReference type="ChEBI" id="CHEBI:49883"/>
        <label>1</label>
    </ligand>
</feature>
<evidence type="ECO:0000255" key="1">
    <source>
        <dbReference type="HAMAP-Rule" id="MF_00206"/>
    </source>
</evidence>
<evidence type="ECO:0000255" key="2">
    <source>
        <dbReference type="PROSITE-ProRule" id="PRU01266"/>
    </source>
</evidence>
<evidence type="ECO:0000256" key="3">
    <source>
        <dbReference type="SAM" id="MobiDB-lite"/>
    </source>
</evidence>
<comment type="function">
    <text evidence="1">Catalyzes the radical-mediated insertion of two sulfur atoms into the C-6 and C-8 positions of the octanoyl moiety bound to the lipoyl domains of lipoate-dependent enzymes, thereby converting the octanoylated domains into lipoylated derivatives.</text>
</comment>
<comment type="catalytic activity">
    <reaction evidence="1">
        <text>[[Fe-S] cluster scaffold protein carrying a second [4Fe-4S](2+) cluster] + N(6)-octanoyl-L-lysyl-[protein] + 2 oxidized [2Fe-2S]-[ferredoxin] + 2 S-adenosyl-L-methionine + 4 H(+) = [[Fe-S] cluster scaffold protein] + N(6)-[(R)-dihydrolipoyl]-L-lysyl-[protein] + 4 Fe(3+) + 2 hydrogen sulfide + 2 5'-deoxyadenosine + 2 L-methionine + 2 reduced [2Fe-2S]-[ferredoxin]</text>
        <dbReference type="Rhea" id="RHEA:16585"/>
        <dbReference type="Rhea" id="RHEA-COMP:9928"/>
        <dbReference type="Rhea" id="RHEA-COMP:10000"/>
        <dbReference type="Rhea" id="RHEA-COMP:10001"/>
        <dbReference type="Rhea" id="RHEA-COMP:10475"/>
        <dbReference type="Rhea" id="RHEA-COMP:14568"/>
        <dbReference type="Rhea" id="RHEA-COMP:14569"/>
        <dbReference type="ChEBI" id="CHEBI:15378"/>
        <dbReference type="ChEBI" id="CHEBI:17319"/>
        <dbReference type="ChEBI" id="CHEBI:29034"/>
        <dbReference type="ChEBI" id="CHEBI:29919"/>
        <dbReference type="ChEBI" id="CHEBI:33722"/>
        <dbReference type="ChEBI" id="CHEBI:33737"/>
        <dbReference type="ChEBI" id="CHEBI:33738"/>
        <dbReference type="ChEBI" id="CHEBI:57844"/>
        <dbReference type="ChEBI" id="CHEBI:59789"/>
        <dbReference type="ChEBI" id="CHEBI:78809"/>
        <dbReference type="ChEBI" id="CHEBI:83100"/>
        <dbReference type="EC" id="2.8.1.8"/>
    </reaction>
</comment>
<comment type="cofactor">
    <cofactor evidence="1">
        <name>[4Fe-4S] cluster</name>
        <dbReference type="ChEBI" id="CHEBI:49883"/>
    </cofactor>
    <text evidence="1">Binds 2 [4Fe-4S] clusters per subunit. One cluster is coordinated with 3 cysteines and an exchangeable S-adenosyl-L-methionine.</text>
</comment>
<comment type="pathway">
    <text evidence="1">Protein modification; protein lipoylation via endogenous pathway; protein N(6)-(lipoyl)lysine from octanoyl-[acyl-carrier-protein]: step 2/2.</text>
</comment>
<comment type="subcellular location">
    <subcellularLocation>
        <location evidence="1">Cytoplasm</location>
    </subcellularLocation>
</comment>
<comment type="similarity">
    <text evidence="1">Belongs to the radical SAM superfamily. Lipoyl synthase family.</text>
</comment>
<dbReference type="EC" id="2.8.1.8" evidence="1"/>
<dbReference type="EMBL" id="CP001280">
    <property type="protein sequence ID" value="ACK49495.1"/>
    <property type="molecule type" value="Genomic_DNA"/>
</dbReference>
<dbReference type="RefSeq" id="WP_012589565.1">
    <property type="nucleotide sequence ID" value="NC_011666.1"/>
</dbReference>
<dbReference type="SMR" id="B8EJU1"/>
<dbReference type="STRING" id="395965.Msil_0523"/>
<dbReference type="KEGG" id="msl:Msil_0523"/>
<dbReference type="eggNOG" id="COG0320">
    <property type="taxonomic scope" value="Bacteria"/>
</dbReference>
<dbReference type="HOGENOM" id="CLU_033144_2_1_5"/>
<dbReference type="OrthoDB" id="9787898at2"/>
<dbReference type="UniPathway" id="UPA00538">
    <property type="reaction ID" value="UER00593"/>
</dbReference>
<dbReference type="Proteomes" id="UP000002257">
    <property type="component" value="Chromosome"/>
</dbReference>
<dbReference type="GO" id="GO:0005737">
    <property type="term" value="C:cytoplasm"/>
    <property type="evidence" value="ECO:0007669"/>
    <property type="project" value="UniProtKB-SubCell"/>
</dbReference>
<dbReference type="GO" id="GO:0051539">
    <property type="term" value="F:4 iron, 4 sulfur cluster binding"/>
    <property type="evidence" value="ECO:0007669"/>
    <property type="project" value="UniProtKB-UniRule"/>
</dbReference>
<dbReference type="GO" id="GO:0016992">
    <property type="term" value="F:lipoate synthase activity"/>
    <property type="evidence" value="ECO:0007669"/>
    <property type="project" value="UniProtKB-UniRule"/>
</dbReference>
<dbReference type="GO" id="GO:0046872">
    <property type="term" value="F:metal ion binding"/>
    <property type="evidence" value="ECO:0007669"/>
    <property type="project" value="UniProtKB-KW"/>
</dbReference>
<dbReference type="CDD" id="cd01335">
    <property type="entry name" value="Radical_SAM"/>
    <property type="match status" value="1"/>
</dbReference>
<dbReference type="FunFam" id="3.20.20.70:FF:000186">
    <property type="entry name" value="Lipoyl synthase"/>
    <property type="match status" value="1"/>
</dbReference>
<dbReference type="Gene3D" id="3.20.20.70">
    <property type="entry name" value="Aldolase class I"/>
    <property type="match status" value="1"/>
</dbReference>
<dbReference type="HAMAP" id="MF_00206">
    <property type="entry name" value="Lipoyl_synth"/>
    <property type="match status" value="1"/>
</dbReference>
<dbReference type="InterPro" id="IPR013785">
    <property type="entry name" value="Aldolase_TIM"/>
</dbReference>
<dbReference type="InterPro" id="IPR006638">
    <property type="entry name" value="Elp3/MiaA/NifB-like_rSAM"/>
</dbReference>
<dbReference type="InterPro" id="IPR003698">
    <property type="entry name" value="Lipoyl_synth"/>
</dbReference>
<dbReference type="InterPro" id="IPR007197">
    <property type="entry name" value="rSAM"/>
</dbReference>
<dbReference type="NCBIfam" id="TIGR00510">
    <property type="entry name" value="lipA"/>
    <property type="match status" value="1"/>
</dbReference>
<dbReference type="NCBIfam" id="NF004019">
    <property type="entry name" value="PRK05481.1"/>
    <property type="match status" value="1"/>
</dbReference>
<dbReference type="NCBIfam" id="NF009544">
    <property type="entry name" value="PRK12928.1"/>
    <property type="match status" value="1"/>
</dbReference>
<dbReference type="PANTHER" id="PTHR10949">
    <property type="entry name" value="LIPOYL SYNTHASE"/>
    <property type="match status" value="1"/>
</dbReference>
<dbReference type="PANTHER" id="PTHR10949:SF0">
    <property type="entry name" value="LIPOYL SYNTHASE, MITOCHONDRIAL"/>
    <property type="match status" value="1"/>
</dbReference>
<dbReference type="Pfam" id="PF04055">
    <property type="entry name" value="Radical_SAM"/>
    <property type="match status" value="1"/>
</dbReference>
<dbReference type="PIRSF" id="PIRSF005963">
    <property type="entry name" value="Lipoyl_synth"/>
    <property type="match status" value="1"/>
</dbReference>
<dbReference type="SFLD" id="SFLDF00271">
    <property type="entry name" value="lipoyl_synthase"/>
    <property type="match status" value="1"/>
</dbReference>
<dbReference type="SFLD" id="SFLDS00029">
    <property type="entry name" value="Radical_SAM"/>
    <property type="match status" value="1"/>
</dbReference>
<dbReference type="SMART" id="SM00729">
    <property type="entry name" value="Elp3"/>
    <property type="match status" value="1"/>
</dbReference>
<dbReference type="SUPFAM" id="SSF102114">
    <property type="entry name" value="Radical SAM enzymes"/>
    <property type="match status" value="1"/>
</dbReference>
<dbReference type="PROSITE" id="PS51918">
    <property type="entry name" value="RADICAL_SAM"/>
    <property type="match status" value="1"/>
</dbReference>
<proteinExistence type="inferred from homology"/>
<name>LIPA_METSB</name>
<reference key="1">
    <citation type="journal article" date="2010" name="J. Bacteriol.">
        <title>Complete genome sequence of the aerobic facultative methanotroph Methylocella silvestris BL2.</title>
        <authorList>
            <person name="Chen Y."/>
            <person name="Crombie A."/>
            <person name="Rahman M.T."/>
            <person name="Dedysh S.N."/>
            <person name="Liesack W."/>
            <person name="Stott M.B."/>
            <person name="Alam M."/>
            <person name="Theisen A.R."/>
            <person name="Murrell J.C."/>
            <person name="Dunfield P.F."/>
        </authorList>
    </citation>
    <scope>NUCLEOTIDE SEQUENCE [LARGE SCALE GENOMIC DNA]</scope>
    <source>
        <strain>DSM 15510 / CIP 108128 / LMG 27833 / NCIMB 13906 / BL2</strain>
    </source>
</reference>
<keyword id="KW-0004">4Fe-4S</keyword>
<keyword id="KW-0963">Cytoplasm</keyword>
<keyword id="KW-0408">Iron</keyword>
<keyword id="KW-0411">Iron-sulfur</keyword>
<keyword id="KW-0479">Metal-binding</keyword>
<keyword id="KW-1185">Reference proteome</keyword>
<keyword id="KW-0949">S-adenosyl-L-methionine</keyword>
<keyword id="KW-0808">Transferase</keyword>
<organism>
    <name type="scientific">Methylocella silvestris (strain DSM 15510 / CIP 108128 / LMG 27833 / NCIMB 13906 / BL2)</name>
    <dbReference type="NCBI Taxonomy" id="395965"/>
    <lineage>
        <taxon>Bacteria</taxon>
        <taxon>Pseudomonadati</taxon>
        <taxon>Pseudomonadota</taxon>
        <taxon>Alphaproteobacteria</taxon>
        <taxon>Hyphomicrobiales</taxon>
        <taxon>Beijerinckiaceae</taxon>
        <taxon>Methylocella</taxon>
    </lineage>
</organism>
<protein>
    <recommendedName>
        <fullName evidence="1">Lipoyl synthase</fullName>
        <ecNumber evidence="1">2.8.1.8</ecNumber>
    </recommendedName>
    <alternativeName>
        <fullName evidence="1">Lip-syn</fullName>
        <shortName evidence="1">LS</shortName>
    </alternativeName>
    <alternativeName>
        <fullName evidence="1">Lipoate synthase</fullName>
    </alternativeName>
    <alternativeName>
        <fullName evidence="1">Lipoic acid synthase</fullName>
    </alternativeName>
    <alternativeName>
        <fullName evidence="1">Sulfur insertion protein LipA</fullName>
    </alternativeName>
</protein>
<sequence>MASDSDLLDTKPAETRHPEKAHRPDQPTLRKPDWIRVRAPGSPEWAATNKIVKEHKLVTVCEEAGCPNIGECWAKKHATFMIMGDTCTRACAFCNVKTGLPRALDRNEPQRVADAVAKLGLSHVVITSVDRDDLSDGGARHFAEVIAAIRSLSPKTTIEVLTPDFLRKPGALEIVVAAKPDVFNHNLETVAGKYLGVRPGARYFHSLRLLQRVKELDPTLFTKSGIMLGLGEERQEVLQLMDDLRSADVDFMTIGQYLQPTKKHHAVARFVTPEEFNSYAEIGRAKGFLLMSSSPLTRSSHHAGEDFARLKAKRQALAPCAEAGQ</sequence>
<gene>
    <name evidence="1" type="primary">lipA</name>
    <name type="ordered locus">Msil_0523</name>
</gene>